<accession>B0UQ15</accession>
<comment type="catalytic activity">
    <reaction evidence="1">
        <text>L-histidine = trans-urocanate + NH4(+)</text>
        <dbReference type="Rhea" id="RHEA:21232"/>
        <dbReference type="ChEBI" id="CHEBI:17771"/>
        <dbReference type="ChEBI" id="CHEBI:28938"/>
        <dbReference type="ChEBI" id="CHEBI:57595"/>
        <dbReference type="EC" id="4.3.1.3"/>
    </reaction>
</comment>
<comment type="pathway">
    <text evidence="1">Amino-acid degradation; L-histidine degradation into L-glutamate; N-formimidoyl-L-glutamate from L-histidine: step 1/3.</text>
</comment>
<comment type="subcellular location">
    <subcellularLocation>
        <location evidence="1">Cytoplasm</location>
    </subcellularLocation>
</comment>
<comment type="PTM">
    <text evidence="1">Contains an active site 4-methylidene-imidazol-5-one (MIO), which is formed autocatalytically by cyclization and dehydration of residues Ala-Ser-Gly.</text>
</comment>
<comment type="similarity">
    <text evidence="1">Belongs to the PAL/histidase family.</text>
</comment>
<dbReference type="EC" id="4.3.1.3" evidence="1"/>
<dbReference type="EMBL" id="CP000943">
    <property type="protein sequence ID" value="ACA16146.1"/>
    <property type="molecule type" value="Genomic_DNA"/>
</dbReference>
<dbReference type="RefSeq" id="WP_012331557.1">
    <property type="nucleotide sequence ID" value="NC_010511.1"/>
</dbReference>
<dbReference type="SMR" id="B0UQ15"/>
<dbReference type="STRING" id="426117.M446_1653"/>
<dbReference type="KEGG" id="met:M446_1653"/>
<dbReference type="eggNOG" id="COG2986">
    <property type="taxonomic scope" value="Bacteria"/>
</dbReference>
<dbReference type="HOGENOM" id="CLU_014801_4_0_5"/>
<dbReference type="UniPathway" id="UPA00379">
    <property type="reaction ID" value="UER00549"/>
</dbReference>
<dbReference type="GO" id="GO:0005737">
    <property type="term" value="C:cytoplasm"/>
    <property type="evidence" value="ECO:0007669"/>
    <property type="project" value="UniProtKB-SubCell"/>
</dbReference>
<dbReference type="GO" id="GO:0004397">
    <property type="term" value="F:histidine ammonia-lyase activity"/>
    <property type="evidence" value="ECO:0007669"/>
    <property type="project" value="UniProtKB-UniRule"/>
</dbReference>
<dbReference type="GO" id="GO:0019556">
    <property type="term" value="P:L-histidine catabolic process to glutamate and formamide"/>
    <property type="evidence" value="ECO:0007669"/>
    <property type="project" value="UniProtKB-UniPathway"/>
</dbReference>
<dbReference type="GO" id="GO:0019557">
    <property type="term" value="P:L-histidine catabolic process to glutamate and formate"/>
    <property type="evidence" value="ECO:0007669"/>
    <property type="project" value="UniProtKB-UniPathway"/>
</dbReference>
<dbReference type="CDD" id="cd00332">
    <property type="entry name" value="PAL-HAL"/>
    <property type="match status" value="1"/>
</dbReference>
<dbReference type="FunFam" id="1.10.275.10:FF:000005">
    <property type="entry name" value="Histidine ammonia-lyase"/>
    <property type="match status" value="1"/>
</dbReference>
<dbReference type="FunFam" id="1.20.200.10:FF:000003">
    <property type="entry name" value="Histidine ammonia-lyase"/>
    <property type="match status" value="1"/>
</dbReference>
<dbReference type="Gene3D" id="1.20.200.10">
    <property type="entry name" value="Fumarase/aspartase (Central domain)"/>
    <property type="match status" value="1"/>
</dbReference>
<dbReference type="Gene3D" id="1.10.275.10">
    <property type="entry name" value="Fumarase/aspartase (N-terminal domain)"/>
    <property type="match status" value="1"/>
</dbReference>
<dbReference type="HAMAP" id="MF_00229">
    <property type="entry name" value="His_ammonia_lyase"/>
    <property type="match status" value="1"/>
</dbReference>
<dbReference type="InterPro" id="IPR001106">
    <property type="entry name" value="Aromatic_Lyase"/>
</dbReference>
<dbReference type="InterPro" id="IPR024083">
    <property type="entry name" value="Fumarase/histidase_N"/>
</dbReference>
<dbReference type="InterPro" id="IPR005921">
    <property type="entry name" value="HutH"/>
</dbReference>
<dbReference type="InterPro" id="IPR008948">
    <property type="entry name" value="L-Aspartase-like"/>
</dbReference>
<dbReference type="InterPro" id="IPR022313">
    <property type="entry name" value="Phe/His_NH3-lyase_AS"/>
</dbReference>
<dbReference type="NCBIfam" id="TIGR01225">
    <property type="entry name" value="hutH"/>
    <property type="match status" value="1"/>
</dbReference>
<dbReference type="NCBIfam" id="NF006871">
    <property type="entry name" value="PRK09367.1"/>
    <property type="match status" value="1"/>
</dbReference>
<dbReference type="PANTHER" id="PTHR10362">
    <property type="entry name" value="HISTIDINE AMMONIA-LYASE"/>
    <property type="match status" value="1"/>
</dbReference>
<dbReference type="Pfam" id="PF00221">
    <property type="entry name" value="Lyase_aromatic"/>
    <property type="match status" value="1"/>
</dbReference>
<dbReference type="SUPFAM" id="SSF48557">
    <property type="entry name" value="L-aspartase-like"/>
    <property type="match status" value="1"/>
</dbReference>
<dbReference type="PROSITE" id="PS00488">
    <property type="entry name" value="PAL_HISTIDASE"/>
    <property type="match status" value="1"/>
</dbReference>
<name>HUTH_METS4</name>
<feature type="chain" id="PRO_1000100442" description="Histidine ammonia-lyase">
    <location>
        <begin position="1"/>
        <end position="513"/>
    </location>
</feature>
<feature type="modified residue" description="2,3-didehydroalanine (Ser)" evidence="1">
    <location>
        <position position="143"/>
    </location>
</feature>
<feature type="cross-link" description="5-imidazolinone (Ala-Gly)" evidence="1">
    <location>
        <begin position="142"/>
        <end position="144"/>
    </location>
</feature>
<sequence>MSAVTLTPGRAALAQWRAIRDGAPLRLDPACRPGIARAAETVAAIVARGEPVYGINTGFGKLATVRIAPDDLATLQRNIVLSHAAGVGAPVPAGIVRLMMALKLASLAQGASGVRPETVALLDAMLARGVTPVVPGQGSVGASGDLAPLAHMTAAMIGVGECLDAGGARLPAAAALARADLAPLDLGPKEGLALLNGTQFSTALALAGLFGAEDLLRAGLVTGALSVDAARGSDTPFDPRIHALRRHRGQIDAADALRRLLAGSAIRASHLVGDERVQDPYCLRCQPQVMGAALDLLRQAGATLETEANGVSDNPLVFPETGEALSGGNFHAEPVAFAADMIALALCEIGSLAERRISLLVDPALSSGLPAFLTGRPGLNSGFMIPQVTAAALVSENKQRAYPASVDSIPTSANQEDHVSMAAHGARRLLAMAENAAAVLGIELLAAAQGCDFLAPLRSSEALERVRARLRAAVPRLDEDRYLHPELEAATALVRDGAVVAAAGLDLPGVDGR</sequence>
<evidence type="ECO:0000255" key="1">
    <source>
        <dbReference type="HAMAP-Rule" id="MF_00229"/>
    </source>
</evidence>
<organism>
    <name type="scientific">Methylobacterium sp. (strain 4-46)</name>
    <dbReference type="NCBI Taxonomy" id="426117"/>
    <lineage>
        <taxon>Bacteria</taxon>
        <taxon>Pseudomonadati</taxon>
        <taxon>Pseudomonadota</taxon>
        <taxon>Alphaproteobacteria</taxon>
        <taxon>Hyphomicrobiales</taxon>
        <taxon>Methylobacteriaceae</taxon>
        <taxon>Methylobacterium</taxon>
    </lineage>
</organism>
<keyword id="KW-0963">Cytoplasm</keyword>
<keyword id="KW-0369">Histidine metabolism</keyword>
<keyword id="KW-0456">Lyase</keyword>
<protein>
    <recommendedName>
        <fullName evidence="1">Histidine ammonia-lyase</fullName>
        <shortName evidence="1">Histidase</shortName>
        <ecNumber evidence="1">4.3.1.3</ecNumber>
    </recommendedName>
</protein>
<proteinExistence type="inferred from homology"/>
<reference key="1">
    <citation type="submission" date="2008-02" db="EMBL/GenBank/DDBJ databases">
        <title>Complete sequence of chromosome of Methylobacterium sp. 4-46.</title>
        <authorList>
            <consortium name="US DOE Joint Genome Institute"/>
            <person name="Copeland A."/>
            <person name="Lucas S."/>
            <person name="Lapidus A."/>
            <person name="Glavina del Rio T."/>
            <person name="Dalin E."/>
            <person name="Tice H."/>
            <person name="Bruce D."/>
            <person name="Goodwin L."/>
            <person name="Pitluck S."/>
            <person name="Chertkov O."/>
            <person name="Brettin T."/>
            <person name="Detter J.C."/>
            <person name="Han C."/>
            <person name="Kuske C.R."/>
            <person name="Schmutz J."/>
            <person name="Larimer F."/>
            <person name="Land M."/>
            <person name="Hauser L."/>
            <person name="Kyrpides N."/>
            <person name="Ivanova N."/>
            <person name="Marx C.J."/>
            <person name="Richardson P."/>
        </authorList>
    </citation>
    <scope>NUCLEOTIDE SEQUENCE [LARGE SCALE GENOMIC DNA]</scope>
    <source>
        <strain>4-46</strain>
    </source>
</reference>
<gene>
    <name evidence="1" type="primary">hutH</name>
    <name type="ordered locus">M446_1653</name>
</gene>